<evidence type="ECO:0000255" key="1">
    <source>
        <dbReference type="HAMAP-Rule" id="MF_01569"/>
    </source>
</evidence>
<keyword id="KW-0030">Aminoacyl-tRNA synthetase</keyword>
<keyword id="KW-0067">ATP-binding</keyword>
<keyword id="KW-0963">Cytoplasm</keyword>
<keyword id="KW-0436">Ligase</keyword>
<keyword id="KW-0547">Nucleotide-binding</keyword>
<keyword id="KW-0648">Protein biosynthesis</keyword>
<keyword id="KW-1185">Reference proteome</keyword>
<dbReference type="EC" id="6.1.1.15" evidence="1"/>
<dbReference type="EMBL" id="AL646052">
    <property type="protein sequence ID" value="CAD16523.1"/>
    <property type="molecule type" value="Genomic_DNA"/>
</dbReference>
<dbReference type="RefSeq" id="WP_011002723.1">
    <property type="nucleotide sequence ID" value="NC_003295.1"/>
</dbReference>
<dbReference type="SMR" id="Q8XVL4"/>
<dbReference type="STRING" id="267608.RSc2816"/>
<dbReference type="EnsemblBacteria" id="CAD16523">
    <property type="protein sequence ID" value="CAD16523"/>
    <property type="gene ID" value="RSc2816"/>
</dbReference>
<dbReference type="KEGG" id="rso:RSc2816"/>
<dbReference type="eggNOG" id="COG0442">
    <property type="taxonomic scope" value="Bacteria"/>
</dbReference>
<dbReference type="HOGENOM" id="CLU_016739_0_0_4"/>
<dbReference type="Proteomes" id="UP000001436">
    <property type="component" value="Chromosome"/>
</dbReference>
<dbReference type="GO" id="GO:0005829">
    <property type="term" value="C:cytosol"/>
    <property type="evidence" value="ECO:0007669"/>
    <property type="project" value="TreeGrafter"/>
</dbReference>
<dbReference type="GO" id="GO:0002161">
    <property type="term" value="F:aminoacyl-tRNA deacylase activity"/>
    <property type="evidence" value="ECO:0007669"/>
    <property type="project" value="InterPro"/>
</dbReference>
<dbReference type="GO" id="GO:0005524">
    <property type="term" value="F:ATP binding"/>
    <property type="evidence" value="ECO:0007669"/>
    <property type="project" value="UniProtKB-UniRule"/>
</dbReference>
<dbReference type="GO" id="GO:0004827">
    <property type="term" value="F:proline-tRNA ligase activity"/>
    <property type="evidence" value="ECO:0007669"/>
    <property type="project" value="UniProtKB-UniRule"/>
</dbReference>
<dbReference type="GO" id="GO:0006433">
    <property type="term" value="P:prolyl-tRNA aminoacylation"/>
    <property type="evidence" value="ECO:0007669"/>
    <property type="project" value="UniProtKB-UniRule"/>
</dbReference>
<dbReference type="CDD" id="cd04334">
    <property type="entry name" value="ProRS-INS"/>
    <property type="match status" value="1"/>
</dbReference>
<dbReference type="CDD" id="cd00861">
    <property type="entry name" value="ProRS_anticodon_short"/>
    <property type="match status" value="1"/>
</dbReference>
<dbReference type="CDD" id="cd00779">
    <property type="entry name" value="ProRS_core_prok"/>
    <property type="match status" value="1"/>
</dbReference>
<dbReference type="FunFam" id="3.30.930.10:FF:000012">
    <property type="entry name" value="Proline--tRNA ligase"/>
    <property type="match status" value="1"/>
</dbReference>
<dbReference type="FunFam" id="3.30.930.10:FF:000097">
    <property type="entry name" value="Proline--tRNA ligase"/>
    <property type="match status" value="1"/>
</dbReference>
<dbReference type="Gene3D" id="3.40.50.800">
    <property type="entry name" value="Anticodon-binding domain"/>
    <property type="match status" value="1"/>
</dbReference>
<dbReference type="Gene3D" id="3.30.930.10">
    <property type="entry name" value="Bira Bifunctional Protein, Domain 2"/>
    <property type="match status" value="2"/>
</dbReference>
<dbReference type="HAMAP" id="MF_01569">
    <property type="entry name" value="Pro_tRNA_synth_type1"/>
    <property type="match status" value="1"/>
</dbReference>
<dbReference type="InterPro" id="IPR002314">
    <property type="entry name" value="aa-tRNA-synt_IIb"/>
</dbReference>
<dbReference type="InterPro" id="IPR006195">
    <property type="entry name" value="aa-tRNA-synth_II"/>
</dbReference>
<dbReference type="InterPro" id="IPR045864">
    <property type="entry name" value="aa-tRNA-synth_II/BPL/LPL"/>
</dbReference>
<dbReference type="InterPro" id="IPR004154">
    <property type="entry name" value="Anticodon-bd"/>
</dbReference>
<dbReference type="InterPro" id="IPR036621">
    <property type="entry name" value="Anticodon-bd_dom_sf"/>
</dbReference>
<dbReference type="InterPro" id="IPR002316">
    <property type="entry name" value="Pro-tRNA-ligase_IIa"/>
</dbReference>
<dbReference type="InterPro" id="IPR004500">
    <property type="entry name" value="Pro-tRNA-synth_IIa_bac-type"/>
</dbReference>
<dbReference type="InterPro" id="IPR023717">
    <property type="entry name" value="Pro-tRNA-Synthase_IIa_type1"/>
</dbReference>
<dbReference type="InterPro" id="IPR050062">
    <property type="entry name" value="Pro-tRNA_synthetase"/>
</dbReference>
<dbReference type="InterPro" id="IPR044140">
    <property type="entry name" value="ProRS_anticodon_short"/>
</dbReference>
<dbReference type="InterPro" id="IPR033730">
    <property type="entry name" value="ProRS_core_prok"/>
</dbReference>
<dbReference type="InterPro" id="IPR036754">
    <property type="entry name" value="YbaK/aa-tRNA-synt-asso_dom_sf"/>
</dbReference>
<dbReference type="InterPro" id="IPR007214">
    <property type="entry name" value="YbaK/aa-tRNA-synth-assoc-dom"/>
</dbReference>
<dbReference type="NCBIfam" id="NF006625">
    <property type="entry name" value="PRK09194.1"/>
    <property type="match status" value="1"/>
</dbReference>
<dbReference type="NCBIfam" id="TIGR00409">
    <property type="entry name" value="proS_fam_II"/>
    <property type="match status" value="1"/>
</dbReference>
<dbReference type="PANTHER" id="PTHR42753">
    <property type="entry name" value="MITOCHONDRIAL RIBOSOME PROTEIN L39/PROLYL-TRNA LIGASE FAMILY MEMBER"/>
    <property type="match status" value="1"/>
</dbReference>
<dbReference type="PANTHER" id="PTHR42753:SF2">
    <property type="entry name" value="PROLINE--TRNA LIGASE"/>
    <property type="match status" value="1"/>
</dbReference>
<dbReference type="Pfam" id="PF03129">
    <property type="entry name" value="HGTP_anticodon"/>
    <property type="match status" value="1"/>
</dbReference>
<dbReference type="Pfam" id="PF00587">
    <property type="entry name" value="tRNA-synt_2b"/>
    <property type="match status" value="1"/>
</dbReference>
<dbReference type="Pfam" id="PF04073">
    <property type="entry name" value="tRNA_edit"/>
    <property type="match status" value="1"/>
</dbReference>
<dbReference type="PIRSF" id="PIRSF001535">
    <property type="entry name" value="ProRS_1"/>
    <property type="match status" value="1"/>
</dbReference>
<dbReference type="PRINTS" id="PR01046">
    <property type="entry name" value="TRNASYNTHPRO"/>
</dbReference>
<dbReference type="SUPFAM" id="SSF52954">
    <property type="entry name" value="Class II aaRS ABD-related"/>
    <property type="match status" value="1"/>
</dbReference>
<dbReference type="SUPFAM" id="SSF55681">
    <property type="entry name" value="Class II aaRS and biotin synthetases"/>
    <property type="match status" value="1"/>
</dbReference>
<dbReference type="SUPFAM" id="SSF55826">
    <property type="entry name" value="YbaK/ProRS associated domain"/>
    <property type="match status" value="1"/>
</dbReference>
<dbReference type="PROSITE" id="PS50862">
    <property type="entry name" value="AA_TRNA_LIGASE_II"/>
    <property type="match status" value="1"/>
</dbReference>
<name>SYP_RALN1</name>
<organism>
    <name type="scientific">Ralstonia nicotianae (strain ATCC BAA-1114 / GMI1000)</name>
    <name type="common">Ralstonia solanacearum</name>
    <dbReference type="NCBI Taxonomy" id="267608"/>
    <lineage>
        <taxon>Bacteria</taxon>
        <taxon>Pseudomonadati</taxon>
        <taxon>Pseudomonadota</taxon>
        <taxon>Betaproteobacteria</taxon>
        <taxon>Burkholderiales</taxon>
        <taxon>Burkholderiaceae</taxon>
        <taxon>Ralstonia</taxon>
        <taxon>Ralstonia solanacearum species complex</taxon>
    </lineage>
</organism>
<reference key="1">
    <citation type="journal article" date="2002" name="Nature">
        <title>Genome sequence of the plant pathogen Ralstonia solanacearum.</title>
        <authorList>
            <person name="Salanoubat M."/>
            <person name="Genin S."/>
            <person name="Artiguenave F."/>
            <person name="Gouzy J."/>
            <person name="Mangenot S."/>
            <person name="Arlat M."/>
            <person name="Billault A."/>
            <person name="Brottier P."/>
            <person name="Camus J.-C."/>
            <person name="Cattolico L."/>
            <person name="Chandler M."/>
            <person name="Choisne N."/>
            <person name="Claudel-Renard C."/>
            <person name="Cunnac S."/>
            <person name="Demange N."/>
            <person name="Gaspin C."/>
            <person name="Lavie M."/>
            <person name="Moisan A."/>
            <person name="Robert C."/>
            <person name="Saurin W."/>
            <person name="Schiex T."/>
            <person name="Siguier P."/>
            <person name="Thebault P."/>
            <person name="Whalen M."/>
            <person name="Wincker P."/>
            <person name="Levy M."/>
            <person name="Weissenbach J."/>
            <person name="Boucher C.A."/>
        </authorList>
    </citation>
    <scope>NUCLEOTIDE SEQUENCE [LARGE SCALE GENOMIC DNA]</scope>
    <source>
        <strain>ATCC BAA-1114 / GMI1000</strain>
    </source>
</reference>
<gene>
    <name evidence="1" type="primary">proS</name>
    <name type="ordered locus">RSc2816</name>
</gene>
<accession>Q8XVL4</accession>
<comment type="function">
    <text evidence="1">Catalyzes the attachment of proline to tRNA(Pro) in a two-step reaction: proline is first activated by ATP to form Pro-AMP and then transferred to the acceptor end of tRNA(Pro). As ProRS can inadvertently accommodate and process non-cognate amino acids such as alanine and cysteine, to avoid such errors it has two additional distinct editing activities against alanine. One activity is designated as 'pretransfer' editing and involves the tRNA(Pro)-independent hydrolysis of activated Ala-AMP. The other activity is designated 'posttransfer' editing and involves deacylation of mischarged Ala-tRNA(Pro). The misacylated Cys-tRNA(Pro) is not edited by ProRS.</text>
</comment>
<comment type="catalytic activity">
    <reaction evidence="1">
        <text>tRNA(Pro) + L-proline + ATP = L-prolyl-tRNA(Pro) + AMP + diphosphate</text>
        <dbReference type="Rhea" id="RHEA:14305"/>
        <dbReference type="Rhea" id="RHEA-COMP:9700"/>
        <dbReference type="Rhea" id="RHEA-COMP:9702"/>
        <dbReference type="ChEBI" id="CHEBI:30616"/>
        <dbReference type="ChEBI" id="CHEBI:33019"/>
        <dbReference type="ChEBI" id="CHEBI:60039"/>
        <dbReference type="ChEBI" id="CHEBI:78442"/>
        <dbReference type="ChEBI" id="CHEBI:78532"/>
        <dbReference type="ChEBI" id="CHEBI:456215"/>
        <dbReference type="EC" id="6.1.1.15"/>
    </reaction>
</comment>
<comment type="subunit">
    <text evidence="1">Homodimer.</text>
</comment>
<comment type="subcellular location">
    <subcellularLocation>
        <location evidence="1">Cytoplasm</location>
    </subcellularLocation>
</comment>
<comment type="domain">
    <text evidence="1">Consists of three domains: the N-terminal catalytic domain, the editing domain and the C-terminal anticodon-binding domain.</text>
</comment>
<comment type="similarity">
    <text evidence="1">Belongs to the class-II aminoacyl-tRNA synthetase family. ProS type 1 subfamily.</text>
</comment>
<feature type="chain" id="PRO_0000248755" description="Proline--tRNA ligase">
    <location>
        <begin position="1"/>
        <end position="574"/>
    </location>
</feature>
<protein>
    <recommendedName>
        <fullName evidence="1">Proline--tRNA ligase</fullName>
        <ecNumber evidence="1">6.1.1.15</ecNumber>
    </recommendedName>
    <alternativeName>
        <fullName evidence="1">Prolyl-tRNA synthetase</fullName>
        <shortName evidence="1">ProRS</shortName>
    </alternativeName>
</protein>
<sequence>MKASQFFISTLKEAPADAEIVSHKLMMRAGMIKKLGAGLYTYMPVGLRVIRKVEQIVREEMNASGAVEVLMPVVQPAELWQETGRWDKMGDEMMRVKDRHERDLVIQPTSEEVVTDIARTEIRSYKQMPVNFYQIQTKFRDERRPRFGIMRGREFTMKDAYSFDRDAEGLKVSYEKMYGAYTRIFQRFGLEFRAVAADNGAIGGSGSHEFHVIADTGEDAIVYSPDSDYAANIEAAEALAPAMPRGAATEALTKTHTPKRAKCEAVAEQLGIALQRTVKSIVLAKDVEGGEPQIWLLLLRGDHELNEIKASKVPGLADFRFATEGEILRAFGTPPGYLGPIGTKQPVKVVADRTVAAMSDFVVGANEEDFHYTGVNWGRDLPEAEVYDLRNVVEGDPSPDGKGTLAICRGIEVGHVFMLGTRYSESMSATFLDENGKTQPMMMGCYGIGITRILGAAIEQNYDARGIIWPVSIAPFEVVICPVGYDRSEAVRAEADRLHAELAAAGIDVILDDRGERPGAMFADWELIGVPFRVVVGERGLKDGKLELQGRRDEAAAAVAPADVLATLKSRLAQ</sequence>
<proteinExistence type="inferred from homology"/>